<sequence length="150" mass="17290">MESANASTSATTIDQLCKTFNLSMHTLQINCVFCKNALTTAEIYSYAYKQLKVLFRGGYPYAACACCLEFHGKINQYRHFDYAGYATTVEEETKQDILDVLIRCYLCHKPLCEVEKVKHILTKARFIKLNCTWKGRCLHCWTTCMEDMLP</sequence>
<feature type="chain" id="PRO_0000133325" description="Protein E6">
    <location>
        <begin position="1"/>
        <end position="150"/>
    </location>
</feature>
<feature type="zinc finger region" evidence="1">
    <location>
        <begin position="31"/>
        <end position="67"/>
    </location>
</feature>
<feature type="zinc finger region" evidence="1">
    <location>
        <begin position="104"/>
        <end position="140"/>
    </location>
</feature>
<organism>
    <name type="scientific">Human papillomavirus type 6a</name>
    <dbReference type="NCBI Taxonomy" id="37122"/>
    <lineage>
        <taxon>Viruses</taxon>
        <taxon>Monodnaviria</taxon>
        <taxon>Shotokuvirae</taxon>
        <taxon>Cossaviricota</taxon>
        <taxon>Papovaviricetes</taxon>
        <taxon>Zurhausenvirales</taxon>
        <taxon>Papillomaviridae</taxon>
        <taxon>Firstpapillomavirinae</taxon>
        <taxon>Alphapapillomavirus</taxon>
        <taxon>Alphapapillomavirus 10</taxon>
    </lineage>
</organism>
<evidence type="ECO:0000255" key="1">
    <source>
        <dbReference type="HAMAP-Rule" id="MF_04006"/>
    </source>
</evidence>
<evidence type="ECO:0000269" key="2">
    <source>
    </source>
</evidence>
<evidence type="ECO:0000305" key="3"/>
<protein>
    <recommendedName>
        <fullName evidence="1">Protein E6</fullName>
    </recommendedName>
</protein>
<accession>Q84291</accession>
<organismHost>
    <name type="scientific">Homo sapiens</name>
    <name type="common">Human</name>
    <dbReference type="NCBI Taxonomy" id="9606"/>
</organismHost>
<reference key="1">
    <citation type="journal article" date="1995" name="Virology">
        <title>Sequence determination of human papillomavirus type 6a and assembly of virus-like particles in Saccharomyces cerevisiae.</title>
        <authorList>
            <person name="Hofmann K.J."/>
            <person name="Cook J.C."/>
            <person name="Joyce J.G."/>
            <person name="Brown D.R."/>
            <person name="Schultz L.D."/>
            <person name="George H.A."/>
            <person name="Rosolowsky M."/>
            <person name="Fife K.H."/>
            <person name="Jansen K.U."/>
        </authorList>
    </citation>
    <scope>NUCLEOTIDE SEQUENCE [GENOMIC DNA]</scope>
</reference>
<reference key="2">
    <citation type="journal article" date="2001" name="J. Virol.">
        <title>Interaction of zyxin, a focal adhesion protein, with the E6 protein from human papillomavirus type 6 results in its nuclear translocation.</title>
        <authorList>
            <person name="Degenhardt Y.Y."/>
            <person name="Silverstein S."/>
        </authorList>
    </citation>
    <scope>INTERACTION WITH HUMAN ZYX</scope>
</reference>
<dbReference type="EMBL" id="L41216">
    <property type="protein sequence ID" value="AAA74211.1"/>
    <property type="molecule type" value="Genomic_DNA"/>
</dbReference>
<dbReference type="SMR" id="Q84291"/>
<dbReference type="IntAct" id="Q84291">
    <property type="interactions" value="17"/>
</dbReference>
<dbReference type="MINT" id="Q84291"/>
<dbReference type="Proteomes" id="UP000007675">
    <property type="component" value="Genome"/>
</dbReference>
<dbReference type="GO" id="GO:0030430">
    <property type="term" value="C:host cell cytoplasm"/>
    <property type="evidence" value="ECO:0007669"/>
    <property type="project" value="UniProtKB-SubCell"/>
</dbReference>
<dbReference type="GO" id="GO:0042025">
    <property type="term" value="C:host cell nucleus"/>
    <property type="evidence" value="ECO:0007669"/>
    <property type="project" value="UniProtKB-SubCell"/>
</dbReference>
<dbReference type="GO" id="GO:0003677">
    <property type="term" value="F:DNA binding"/>
    <property type="evidence" value="ECO:0007669"/>
    <property type="project" value="UniProtKB-UniRule"/>
</dbReference>
<dbReference type="GO" id="GO:0008270">
    <property type="term" value="F:zinc ion binding"/>
    <property type="evidence" value="ECO:0007669"/>
    <property type="project" value="UniProtKB-KW"/>
</dbReference>
<dbReference type="GO" id="GO:0006351">
    <property type="term" value="P:DNA-templated transcription"/>
    <property type="evidence" value="ECO:0007669"/>
    <property type="project" value="UniProtKB-UniRule"/>
</dbReference>
<dbReference type="GO" id="GO:0006355">
    <property type="term" value="P:regulation of DNA-templated transcription"/>
    <property type="evidence" value="ECO:0007669"/>
    <property type="project" value="UniProtKB-UniRule"/>
</dbReference>
<dbReference type="GO" id="GO:0052150">
    <property type="term" value="P:symbiont-mediated perturbation of host apoptosis"/>
    <property type="evidence" value="ECO:0007669"/>
    <property type="project" value="UniProtKB-KW"/>
</dbReference>
<dbReference type="GO" id="GO:0039648">
    <property type="term" value="P:symbiont-mediated perturbation of host ubiquitin-like protein modification"/>
    <property type="evidence" value="ECO:0007669"/>
    <property type="project" value="UniProtKB-UniRule"/>
</dbReference>
<dbReference type="GO" id="GO:0052170">
    <property type="term" value="P:symbiont-mediated suppression of host innate immune response"/>
    <property type="evidence" value="ECO:0007669"/>
    <property type="project" value="UniProtKB-KW"/>
</dbReference>
<dbReference type="GO" id="GO:0039502">
    <property type="term" value="P:symbiont-mediated suppression of host type I interferon-mediated signaling pathway"/>
    <property type="evidence" value="ECO:0007669"/>
    <property type="project" value="UniProtKB-UniRule"/>
</dbReference>
<dbReference type="Gene3D" id="3.30.240.40">
    <property type="entry name" value="E6 early regulatory protein"/>
    <property type="match status" value="2"/>
</dbReference>
<dbReference type="HAMAP" id="MF_04006">
    <property type="entry name" value="HPV_E6"/>
    <property type="match status" value="1"/>
</dbReference>
<dbReference type="InterPro" id="IPR001334">
    <property type="entry name" value="E6"/>
</dbReference>
<dbReference type="InterPro" id="IPR038575">
    <property type="entry name" value="E6_sf"/>
</dbReference>
<dbReference type="Pfam" id="PF00518">
    <property type="entry name" value="E6"/>
    <property type="match status" value="1"/>
</dbReference>
<dbReference type="SUPFAM" id="SSF161229">
    <property type="entry name" value="E6 C-terminal domain-like"/>
    <property type="match status" value="2"/>
</dbReference>
<gene>
    <name evidence="1" type="primary">E6</name>
</gene>
<name>VE6_HPV6A</name>
<comment type="function">
    <text evidence="1">Plays a major role in the induction and maintenance of cellular transformation. E6 associates with host UBE3A/E6-AP ubiquitin-protein ligase and modulates its activity. Sequesters tumor suppressor TP53 in the host cytoplasm and modulates its activity by interacting with host EP300 that results in the reduction of TP53 acetylation and activation. In turn, apoptosis induced by DNA damage is inhibited. E6 also protects host keratinocytes from apoptosis by mediating the degradation of host BAK1. May also inhibit host immune response.</text>
</comment>
<comment type="subunit">
    <text evidence="1 2">Forms homodimers. Interacts with ubiquitin-protein ligase UBE3A/E6-AP; this interaction stimulates UBE3A ubiquitin activity. Interacts with host TP53 and EP300; this interaction inhibits TP53 activity. Interacts with human ZYX.</text>
</comment>
<comment type="subcellular location">
    <subcellularLocation>
        <location evidence="1">Host cytoplasm</location>
    </subcellularLocation>
    <subcellularLocation>
        <location evidence="1">Host nucleus</location>
    </subcellularLocation>
</comment>
<comment type="miscellaneous">
    <text evidence="1">Belongs to the low risk human alphapapillomavirus family. The cancer-causing human papillomavirus E6 protein has a unique carboxy terminal PDZ domain containing substrate but low risk E6s do not possess this domain.</text>
</comment>
<comment type="similarity">
    <text evidence="3">Belongs to the papillomaviridae E6 protein family.</text>
</comment>
<proteinExistence type="evidence at protein level"/>
<keyword id="KW-0010">Activator</keyword>
<keyword id="KW-0238">DNA-binding</keyword>
<keyword id="KW-0244">Early protein</keyword>
<keyword id="KW-1035">Host cytoplasm</keyword>
<keyword id="KW-1048">Host nucleus</keyword>
<keyword id="KW-0945">Host-virus interaction</keyword>
<keyword id="KW-1090">Inhibition of host innate immune response by virus</keyword>
<keyword id="KW-0479">Metal-binding</keyword>
<keyword id="KW-1119">Modulation of host cell apoptosis by virus</keyword>
<keyword id="KW-0804">Transcription</keyword>
<keyword id="KW-0805">Transcription regulation</keyword>
<keyword id="KW-0899">Viral immunoevasion</keyword>
<keyword id="KW-0862">Zinc</keyword>
<keyword id="KW-0863">Zinc-finger</keyword>